<comment type="function">
    <text>Participates in sulfate respiration coupled with phosphorylation by transferring electrons from the enzyme dehydrogenase to ferredoxin.</text>
</comment>
<comment type="cofactor">
    <cofactor evidence="1">
        <name>heme c</name>
        <dbReference type="ChEBI" id="CHEBI:61717"/>
    </cofactor>
    <text evidence="1">Binds 4 heme c groups covalently per monomer.</text>
</comment>
<comment type="subunit">
    <text>Homodimer.</text>
</comment>
<comment type="subcellular location">
    <subcellularLocation>
        <location>Periplasm</location>
    </subcellularLocation>
</comment>
<comment type="miscellaneous">
    <text evidence="1">The second heme binding site has an unusual CXXXXCH motif.</text>
</comment>
<evidence type="ECO:0000269" key="1">
    <source>
    </source>
</evidence>
<evidence type="ECO:0007744" key="2">
    <source>
        <dbReference type="PDB" id="1AQE"/>
    </source>
</evidence>
<evidence type="ECO:0007744" key="3">
    <source>
        <dbReference type="PDB" id="1CZJ"/>
    </source>
</evidence>
<evidence type="ECO:0007829" key="4">
    <source>
        <dbReference type="PDB" id="1AQE"/>
    </source>
</evidence>
<evidence type="ECO:0007829" key="5">
    <source>
        <dbReference type="PDB" id="1CZJ"/>
    </source>
</evidence>
<name>CYC32_DESNO</name>
<proteinExistence type="evidence at protein level"/>
<protein>
    <recommendedName>
        <fullName>Cytochrome c3, 26 kDa</fullName>
    </recommendedName>
</protein>
<reference key="1">
    <citation type="journal article" date="1994" name="Biochim. Biophys. Acta">
        <title>Amino-acid sequence of the cytochrome c3 (M(r) 26,000) from Desulfovibrio desulfuricans Norway and a comparison with those of the other polyhemic cytochromes from Desulfovibrio.</title>
        <authorList>
            <person name="Bruschi M."/>
            <person name="Leroy G."/>
            <person name="Guerlesquin F."/>
            <person name="Bonicel J."/>
        </authorList>
    </citation>
    <scope>PROTEIN SEQUENCE</scope>
</reference>
<reference key="2">
    <citation type="journal article" date="1989" name="Biochem. Biophys. Res. Commun.">
        <title>Comparative studies of polyhemic cytochromes c isolated from Desulfovibrio vulgaris (Hildenborough) and Desulfovibrio desulfuricans (Norway).</title>
        <authorList>
            <person name="Loutfi M."/>
            <person name="Guerlesquin F."/>
            <person name="Bianco P."/>
            <person name="Haladjian J."/>
            <person name="Bruschi M."/>
        </authorList>
    </citation>
    <scope>PROTEIN SEQUENCE OF 1-30</scope>
</reference>
<reference key="3">
    <citation type="journal article" date="1996" name="Structure">
        <title>Crystal structure of a dimeric octaheme cytochrome c3 (M(r) 26,000) from Desulfovibrio desulfuricans Norway.</title>
        <authorList>
            <person name="Czjek M."/>
            <person name="Guerlesquin F."/>
            <person name="Bruschi M."/>
            <person name="Haser R."/>
        </authorList>
    </citation>
    <scope>X-RAY CRYSTALLOGRAPHY (2.16 ANGSTROMS)</scope>
</reference>
<reference key="4">
    <citation type="journal article" date="1998" name="Biochemistry">
        <title>Structural and kinetic studies of the Y73E mutant of octaheme cytochrome c3 (Mr = 26 000) from Desulfovibrio desulfuricans Norway.</title>
        <authorList>
            <person name="Aubert C."/>
            <person name="Giudici-Orticoni M.-T."/>
            <person name="Czjzek M."/>
            <person name="Haser R."/>
            <person name="Bruschi M."/>
            <person name="Dolla A."/>
        </authorList>
    </citation>
    <scope>X-RAY CRYSTALLOGRAPHY (2.2 ANGSTROMS) OF MUTANT GLU-73</scope>
</reference>
<keyword id="KW-0002">3D-structure</keyword>
<keyword id="KW-0903">Direct protein sequencing</keyword>
<keyword id="KW-0249">Electron transport</keyword>
<keyword id="KW-0349">Heme</keyword>
<keyword id="KW-0408">Iron</keyword>
<keyword id="KW-0479">Metal-binding</keyword>
<keyword id="KW-0574">Periplasm</keyword>
<keyword id="KW-0763">Sulfate respiration</keyword>
<keyword id="KW-0813">Transport</keyword>
<sequence length="111" mass="12522">ETFEIPESVTMSPKQFEGYTPKKGDVTFNHASHMDIACQQCHHTVPDTYTIESCMTEGCHDNIKERTEISSVYRTFHTTKDSEKSCVGCHRELKRQGPSDAPLACNSCHVQ</sequence>
<dbReference type="PIR" id="S43400">
    <property type="entry name" value="S43400"/>
</dbReference>
<dbReference type="PDB" id="1AQE">
    <property type="method" value="X-ray"/>
    <property type="resolution" value="2.20 A"/>
    <property type="chains" value="A=1-111"/>
</dbReference>
<dbReference type="PDB" id="1CZJ">
    <property type="method" value="X-ray"/>
    <property type="resolution" value="2.16 A"/>
    <property type="chains" value="A=1-111"/>
</dbReference>
<dbReference type="PDBsum" id="1AQE"/>
<dbReference type="PDBsum" id="1CZJ"/>
<dbReference type="SMR" id="P38554"/>
<dbReference type="STRING" id="52561.SAMN05421830_11426"/>
<dbReference type="EvolutionaryTrace" id="P38554"/>
<dbReference type="GO" id="GO:0042597">
    <property type="term" value="C:periplasmic space"/>
    <property type="evidence" value="ECO:0007669"/>
    <property type="project" value="UniProtKB-SubCell"/>
</dbReference>
<dbReference type="GO" id="GO:0009055">
    <property type="term" value="F:electron transfer activity"/>
    <property type="evidence" value="ECO:0007669"/>
    <property type="project" value="InterPro"/>
</dbReference>
<dbReference type="GO" id="GO:0020037">
    <property type="term" value="F:heme binding"/>
    <property type="evidence" value="ECO:0007669"/>
    <property type="project" value="InterPro"/>
</dbReference>
<dbReference type="GO" id="GO:0046872">
    <property type="term" value="F:metal ion binding"/>
    <property type="evidence" value="ECO:0007669"/>
    <property type="project" value="UniProtKB-KW"/>
</dbReference>
<dbReference type="GO" id="GO:0009061">
    <property type="term" value="P:anaerobic respiration"/>
    <property type="evidence" value="ECO:0007669"/>
    <property type="project" value="UniProtKB-KW"/>
</dbReference>
<dbReference type="CDD" id="cd08168">
    <property type="entry name" value="Cytochrom_C3"/>
    <property type="match status" value="1"/>
</dbReference>
<dbReference type="Gene3D" id="3.90.10.10">
    <property type="entry name" value="Cytochrome C3"/>
    <property type="match status" value="1"/>
</dbReference>
<dbReference type="InterPro" id="IPR002322">
    <property type="entry name" value="Cyt_c_III"/>
</dbReference>
<dbReference type="InterPro" id="IPR020942">
    <property type="entry name" value="Cyt_c_III_dom"/>
</dbReference>
<dbReference type="InterPro" id="IPR036280">
    <property type="entry name" value="Multihaem_cyt_sf"/>
</dbReference>
<dbReference type="Pfam" id="PF02085">
    <property type="entry name" value="Cytochrom_CIII"/>
    <property type="match status" value="1"/>
</dbReference>
<dbReference type="PRINTS" id="PR00609">
    <property type="entry name" value="CYTOCHROMEC3"/>
</dbReference>
<dbReference type="SUPFAM" id="SSF48695">
    <property type="entry name" value="Multiheme cytochromes"/>
    <property type="match status" value="1"/>
</dbReference>
<dbReference type="PROSITE" id="PS51008">
    <property type="entry name" value="MULTIHEME_CYTC"/>
    <property type="match status" value="1"/>
</dbReference>
<organism>
    <name type="scientific">Desulfomicrobium norvegicum (strain DSM 1741 / NCIMB 8310)</name>
    <name type="common">Desulfovibrio baculatus (strain Norway 4)</name>
    <name type="synonym">Desulfovibrio desulfuricans (strain Norway 4)</name>
    <dbReference type="NCBI Taxonomy" id="52561"/>
    <lineage>
        <taxon>Bacteria</taxon>
        <taxon>Pseudomonadati</taxon>
        <taxon>Thermodesulfobacteriota</taxon>
        <taxon>Desulfovibrionia</taxon>
        <taxon>Desulfovibrionales</taxon>
        <taxon>Desulfomicrobiaceae</taxon>
        <taxon>Desulfomicrobium</taxon>
    </lineage>
</organism>
<accession>P38554</accession>
<feature type="chain" id="PRO_0000108359" description="Cytochrome c3, 26 kDa">
    <location>
        <begin position="1"/>
        <end position="111"/>
    </location>
</feature>
<feature type="binding site" description="axial binding residue" evidence="1 2 3">
    <location>
        <position position="30"/>
    </location>
    <ligand>
        <name>heme c</name>
        <dbReference type="ChEBI" id="CHEBI:61717"/>
        <label>1</label>
    </ligand>
    <ligandPart>
        <name>Fe</name>
        <dbReference type="ChEBI" id="CHEBI:18248"/>
    </ligandPart>
</feature>
<feature type="binding site" description="axial binding residue" evidence="1 2 3">
    <location>
        <position position="33"/>
    </location>
    <ligand>
        <name>heme c</name>
        <dbReference type="ChEBI" id="CHEBI:61717"/>
        <label>3</label>
    </ligand>
    <ligandPart>
        <name>Fe</name>
        <dbReference type="ChEBI" id="CHEBI:18248"/>
    </ligandPart>
</feature>
<feature type="binding site" description="covalent" evidence="1 2 3">
    <location>
        <position position="38"/>
    </location>
    <ligand>
        <name>heme c</name>
        <dbReference type="ChEBI" id="CHEBI:61717"/>
        <label>1</label>
    </ligand>
</feature>
<feature type="binding site" description="covalent" evidence="1 2 3">
    <location>
        <position position="41"/>
    </location>
    <ligand>
        <name>heme c</name>
        <dbReference type="ChEBI" id="CHEBI:61717"/>
        <label>1</label>
    </ligand>
</feature>
<feature type="binding site" description="axial binding residue" evidence="1 2 3">
    <location>
        <position position="42"/>
    </location>
    <ligand>
        <name>heme c</name>
        <dbReference type="ChEBI" id="CHEBI:61717"/>
        <label>1</label>
    </ligand>
    <ligandPart>
        <name>Fe</name>
        <dbReference type="ChEBI" id="CHEBI:18248"/>
    </ligandPart>
</feature>
<feature type="binding site" description="axial binding residue" evidence="1 2 3">
    <location>
        <position position="43"/>
    </location>
    <ligand>
        <name>heme c</name>
        <dbReference type="ChEBI" id="CHEBI:61717"/>
        <label>2</label>
    </ligand>
    <ligandPart>
        <name>Fe</name>
        <dbReference type="ChEBI" id="CHEBI:18248"/>
    </ligandPart>
</feature>
<feature type="binding site" description="covalent" evidence="1 2 3">
    <location>
        <position position="54"/>
    </location>
    <ligand>
        <name>heme c</name>
        <dbReference type="ChEBI" id="CHEBI:61717"/>
        <label>2</label>
    </ligand>
</feature>
<feature type="binding site" description="covalent" evidence="1 2 3">
    <location>
        <position position="59"/>
    </location>
    <ligand>
        <name>heme c</name>
        <dbReference type="ChEBI" id="CHEBI:61717"/>
        <label>2</label>
    </ligand>
</feature>
<feature type="binding site" description="axial binding residue" evidence="1 2 3">
    <location>
        <position position="60"/>
    </location>
    <ligand>
        <name>heme c</name>
        <dbReference type="ChEBI" id="CHEBI:61717"/>
        <label>2</label>
    </ligand>
    <ligandPart>
        <name>Fe</name>
        <dbReference type="ChEBI" id="CHEBI:18248"/>
    </ligandPart>
</feature>
<feature type="binding site" description="axial binding residue" evidence="1 2 3">
    <location>
        <position position="77"/>
    </location>
    <ligand>
        <name>heme c</name>
        <dbReference type="ChEBI" id="CHEBI:61717"/>
        <label>4</label>
    </ligand>
    <ligandPart>
        <name>Fe</name>
        <dbReference type="ChEBI" id="CHEBI:18248"/>
    </ligandPart>
</feature>
<feature type="binding site" description="covalent" evidence="1 2 3">
    <location>
        <position position="86"/>
    </location>
    <ligand>
        <name>heme c</name>
        <dbReference type="ChEBI" id="CHEBI:61717"/>
        <label>3</label>
    </ligand>
</feature>
<feature type="binding site" description="covalent" evidence="1 2 3">
    <location>
        <position position="89"/>
    </location>
    <ligand>
        <name>heme c</name>
        <dbReference type="ChEBI" id="CHEBI:61717"/>
        <label>3</label>
    </ligand>
</feature>
<feature type="binding site" description="axial binding residue" evidence="1 2 3">
    <location>
        <position position="90"/>
    </location>
    <ligand>
        <name>heme c</name>
        <dbReference type="ChEBI" id="CHEBI:61717"/>
        <label>3</label>
    </ligand>
    <ligandPart>
        <name>Fe</name>
        <dbReference type="ChEBI" id="CHEBI:18248"/>
    </ligandPart>
</feature>
<feature type="binding site" description="covalent" evidence="1 2 3">
    <location>
        <position position="105"/>
    </location>
    <ligand>
        <name>heme c</name>
        <dbReference type="ChEBI" id="CHEBI:61717"/>
        <label>4</label>
    </ligand>
</feature>
<feature type="binding site" description="covalent" evidence="1 2 3">
    <location>
        <position position="108"/>
    </location>
    <ligand>
        <name>heme c</name>
        <dbReference type="ChEBI" id="CHEBI:61717"/>
        <label>4</label>
    </ligand>
</feature>
<feature type="binding site" description="axial binding residue" evidence="1 2 3">
    <location>
        <position position="109"/>
    </location>
    <ligand>
        <name>heme c</name>
        <dbReference type="ChEBI" id="CHEBI:61717"/>
        <label>4</label>
    </ligand>
    <ligandPart>
        <name>Fe</name>
        <dbReference type="ChEBI" id="CHEBI:18248"/>
    </ligandPart>
</feature>
<feature type="strand" evidence="5">
    <location>
        <begin position="7"/>
        <end position="11"/>
    </location>
</feature>
<feature type="helix" evidence="4">
    <location>
        <begin position="13"/>
        <end position="15"/>
    </location>
</feature>
<feature type="strand" evidence="5">
    <location>
        <begin position="16"/>
        <end position="18"/>
    </location>
</feature>
<feature type="strand" evidence="5">
    <location>
        <begin position="26"/>
        <end position="30"/>
    </location>
</feature>
<feature type="helix" evidence="5">
    <location>
        <begin position="31"/>
        <end position="33"/>
    </location>
</feature>
<feature type="helix" evidence="5">
    <location>
        <begin position="38"/>
        <end position="41"/>
    </location>
</feature>
<feature type="helix" evidence="5">
    <location>
        <begin position="45"/>
        <end position="48"/>
    </location>
</feature>
<feature type="strand" evidence="4">
    <location>
        <begin position="62"/>
        <end position="64"/>
    </location>
</feature>
<feature type="strand" evidence="5">
    <location>
        <begin position="66"/>
        <end position="68"/>
    </location>
</feature>
<feature type="helix" evidence="5">
    <location>
        <begin position="72"/>
        <end position="77"/>
    </location>
</feature>
<feature type="strand" evidence="5">
    <location>
        <begin position="82"/>
        <end position="84"/>
    </location>
</feature>
<feature type="helix" evidence="5">
    <location>
        <begin position="86"/>
        <end position="95"/>
    </location>
</feature>
<feature type="helix" evidence="5">
    <location>
        <begin position="105"/>
        <end position="108"/>
    </location>
</feature>